<dbReference type="EC" id="5.2.1.8"/>
<dbReference type="EMBL" id="AE016879">
    <property type="protein sequence ID" value="AAP25134.1"/>
    <property type="molecule type" value="Genomic_DNA"/>
</dbReference>
<dbReference type="EMBL" id="AE017334">
    <property type="protein sequence ID" value="AAT30258.1"/>
    <property type="molecule type" value="Genomic_DNA"/>
</dbReference>
<dbReference type="EMBL" id="AE017225">
    <property type="protein sequence ID" value="AAT53407.1"/>
    <property type="molecule type" value="Genomic_DNA"/>
</dbReference>
<dbReference type="RefSeq" id="NP_843648.1">
    <property type="nucleotide sequence ID" value="NC_003997.3"/>
</dbReference>
<dbReference type="RefSeq" id="YP_027356.1">
    <property type="nucleotide sequence ID" value="NC_005945.1"/>
</dbReference>
<dbReference type="PDB" id="6VJ4">
    <property type="method" value="X-ray"/>
    <property type="resolution" value="1.70 A"/>
    <property type="chains" value="A=29-285"/>
</dbReference>
<dbReference type="PDBsum" id="6VJ4"/>
<dbReference type="SMR" id="Q81TU1"/>
<dbReference type="STRING" id="261594.GBAA_1169"/>
<dbReference type="DNASU" id="1089182"/>
<dbReference type="GeneID" id="45021180"/>
<dbReference type="KEGG" id="ban:BA_1169"/>
<dbReference type="KEGG" id="banh:HYU01_06045"/>
<dbReference type="KEGG" id="bar:GBAA_1169"/>
<dbReference type="KEGG" id="bat:BAS1084"/>
<dbReference type="PATRIC" id="fig|198094.11.peg.1148"/>
<dbReference type="eggNOG" id="COG0760">
    <property type="taxonomic scope" value="Bacteria"/>
</dbReference>
<dbReference type="HOGENOM" id="CLU_034646_6_1_9"/>
<dbReference type="OMA" id="DMLYEMM"/>
<dbReference type="OrthoDB" id="14196at2"/>
<dbReference type="Proteomes" id="UP000000427">
    <property type="component" value="Chromosome"/>
</dbReference>
<dbReference type="Proteomes" id="UP000000594">
    <property type="component" value="Chromosome"/>
</dbReference>
<dbReference type="GO" id="GO:0005886">
    <property type="term" value="C:plasma membrane"/>
    <property type="evidence" value="ECO:0007669"/>
    <property type="project" value="UniProtKB-SubCell"/>
</dbReference>
<dbReference type="GO" id="GO:0003755">
    <property type="term" value="F:peptidyl-prolyl cis-trans isomerase activity"/>
    <property type="evidence" value="ECO:0007669"/>
    <property type="project" value="UniProtKB-UniRule"/>
</dbReference>
<dbReference type="GO" id="GO:0006457">
    <property type="term" value="P:protein folding"/>
    <property type="evidence" value="ECO:0007669"/>
    <property type="project" value="UniProtKB-UniRule"/>
</dbReference>
<dbReference type="FunFam" id="3.10.50.40:FF:000033">
    <property type="entry name" value="Foldase protein PrsA"/>
    <property type="match status" value="1"/>
</dbReference>
<dbReference type="Gene3D" id="3.10.50.40">
    <property type="match status" value="1"/>
</dbReference>
<dbReference type="HAMAP" id="MF_01145">
    <property type="entry name" value="Foldase_PrsA"/>
    <property type="match status" value="1"/>
</dbReference>
<dbReference type="InterPro" id="IPR023059">
    <property type="entry name" value="Foldase_PrsA"/>
</dbReference>
<dbReference type="InterPro" id="IPR046357">
    <property type="entry name" value="PPIase_dom_sf"/>
</dbReference>
<dbReference type="InterPro" id="IPR000297">
    <property type="entry name" value="PPIase_PpiC"/>
</dbReference>
<dbReference type="InterPro" id="IPR023058">
    <property type="entry name" value="PPIase_PpiC_CS"/>
</dbReference>
<dbReference type="InterPro" id="IPR050245">
    <property type="entry name" value="PrsA_foldase"/>
</dbReference>
<dbReference type="InterPro" id="IPR027304">
    <property type="entry name" value="Trigger_fact/SurA_dom_sf"/>
</dbReference>
<dbReference type="NCBIfam" id="NF002827">
    <property type="entry name" value="PRK03002.1"/>
    <property type="match status" value="1"/>
</dbReference>
<dbReference type="PANTHER" id="PTHR47245:SF1">
    <property type="entry name" value="FOLDASE PROTEIN PRSA"/>
    <property type="match status" value="1"/>
</dbReference>
<dbReference type="PANTHER" id="PTHR47245">
    <property type="entry name" value="PEPTIDYLPROLYL ISOMERASE"/>
    <property type="match status" value="1"/>
</dbReference>
<dbReference type="Pfam" id="PF00639">
    <property type="entry name" value="Rotamase"/>
    <property type="match status" value="1"/>
</dbReference>
<dbReference type="SUPFAM" id="SSF54534">
    <property type="entry name" value="FKBP-like"/>
    <property type="match status" value="1"/>
</dbReference>
<dbReference type="SUPFAM" id="SSF109998">
    <property type="entry name" value="Triger factor/SurA peptide-binding domain-like"/>
    <property type="match status" value="1"/>
</dbReference>
<dbReference type="PROSITE" id="PS01096">
    <property type="entry name" value="PPIC_PPIASE_1"/>
    <property type="match status" value="1"/>
</dbReference>
<dbReference type="PROSITE" id="PS50198">
    <property type="entry name" value="PPIC_PPIASE_2"/>
    <property type="match status" value="1"/>
</dbReference>
<dbReference type="PROSITE" id="PS51257">
    <property type="entry name" value="PROKAR_LIPOPROTEIN"/>
    <property type="match status" value="1"/>
</dbReference>
<sequence length="285" mass="32079">MRGKHIFIITALISILMLAACGQKNSSATVATATDSTITKSDFEKQLKDRYGKDMLYEMIAQDVITKKYKVSDDDVDKEVQKAKSQYGDQFKNVLKNNGLKDEADFKNQIKFKLSMNKAIKQSVTEKDVKDHYKPEIKASHILVSDENEAKEIKKKLDTGASFEELAKQESQDLLSKEKGGDLGYFHSGAMTPEFETAAYKLKIGQISDPVQSPNGYHIIKLTGKKDLKPYDEVKNSIRKNLEEERTADPIFGKKLLQSELKKANIKINDSELEDTFTIVSPQGN</sequence>
<evidence type="ECO:0000255" key="1"/>
<evidence type="ECO:0000305" key="2"/>
<evidence type="ECO:0007829" key="3">
    <source>
        <dbReference type="PDB" id="6VJ4"/>
    </source>
</evidence>
<comment type="function">
    <text>Plays a major role in protein secretion by helping the post-translocational extracellular folding of several secreted proteins. Important for the secretion of the protective antigen. The three PsrA proteins in this organism show different but overlapping substrate specificities.</text>
</comment>
<comment type="catalytic activity">
    <reaction>
        <text>[protein]-peptidylproline (omega=180) = [protein]-peptidylproline (omega=0)</text>
        <dbReference type="Rhea" id="RHEA:16237"/>
        <dbReference type="Rhea" id="RHEA-COMP:10747"/>
        <dbReference type="Rhea" id="RHEA-COMP:10748"/>
        <dbReference type="ChEBI" id="CHEBI:83833"/>
        <dbReference type="ChEBI" id="CHEBI:83834"/>
        <dbReference type="EC" id="5.2.1.8"/>
    </reaction>
</comment>
<comment type="subcellular location">
    <subcellularLocation>
        <location evidence="2">Cell membrane</location>
        <topology evidence="2">Lipid-anchor</topology>
    </subcellularLocation>
</comment>
<comment type="similarity">
    <text evidence="2">Belongs to the PrsA family.</text>
</comment>
<reference key="1">
    <citation type="journal article" date="2003" name="Nature">
        <title>The genome sequence of Bacillus anthracis Ames and comparison to closely related bacteria.</title>
        <authorList>
            <person name="Read T.D."/>
            <person name="Peterson S.N."/>
            <person name="Tourasse N.J."/>
            <person name="Baillie L.W."/>
            <person name="Paulsen I.T."/>
            <person name="Nelson K.E."/>
            <person name="Tettelin H."/>
            <person name="Fouts D.E."/>
            <person name="Eisen J.A."/>
            <person name="Gill S.R."/>
            <person name="Holtzapple E.K."/>
            <person name="Okstad O.A."/>
            <person name="Helgason E."/>
            <person name="Rilstone J."/>
            <person name="Wu M."/>
            <person name="Kolonay J.F."/>
            <person name="Beanan M.J."/>
            <person name="Dodson R.J."/>
            <person name="Brinkac L.M."/>
            <person name="Gwinn M.L."/>
            <person name="DeBoy R.T."/>
            <person name="Madpu R."/>
            <person name="Daugherty S.C."/>
            <person name="Durkin A.S."/>
            <person name="Haft D.H."/>
            <person name="Nelson W.C."/>
            <person name="Peterson J.D."/>
            <person name="Pop M."/>
            <person name="Khouri H.M."/>
            <person name="Radune D."/>
            <person name="Benton J.L."/>
            <person name="Mahamoud Y."/>
            <person name="Jiang L."/>
            <person name="Hance I.R."/>
            <person name="Weidman J.F."/>
            <person name="Berry K.J."/>
            <person name="Plaut R.D."/>
            <person name="Wolf A.M."/>
            <person name="Watkins K.L."/>
            <person name="Nierman W.C."/>
            <person name="Hazen A."/>
            <person name="Cline R.T."/>
            <person name="Redmond C."/>
            <person name="Thwaite J.E."/>
            <person name="White O."/>
            <person name="Salzberg S.L."/>
            <person name="Thomason B."/>
            <person name="Friedlander A.M."/>
            <person name="Koehler T.M."/>
            <person name="Hanna P.C."/>
            <person name="Kolstoe A.-B."/>
            <person name="Fraser C.M."/>
        </authorList>
    </citation>
    <scope>NUCLEOTIDE SEQUENCE [LARGE SCALE GENOMIC DNA]</scope>
    <source>
        <strain>Ames / isolate Porton</strain>
    </source>
</reference>
<reference key="2">
    <citation type="journal article" date="2009" name="J. Bacteriol.">
        <title>The complete genome sequence of Bacillus anthracis Ames 'Ancestor'.</title>
        <authorList>
            <person name="Ravel J."/>
            <person name="Jiang L."/>
            <person name="Stanley S.T."/>
            <person name="Wilson M.R."/>
            <person name="Decker R.S."/>
            <person name="Read T.D."/>
            <person name="Worsham P."/>
            <person name="Keim P.S."/>
            <person name="Salzberg S.L."/>
            <person name="Fraser-Liggett C.M."/>
            <person name="Rasko D.A."/>
        </authorList>
    </citation>
    <scope>NUCLEOTIDE SEQUENCE [LARGE SCALE GENOMIC DNA]</scope>
    <source>
        <strain>Ames ancestor</strain>
    </source>
</reference>
<reference key="3">
    <citation type="submission" date="2004-01" db="EMBL/GenBank/DDBJ databases">
        <title>Complete genome sequence of Bacillus anthracis Sterne.</title>
        <authorList>
            <person name="Brettin T.S."/>
            <person name="Bruce D."/>
            <person name="Challacombe J.F."/>
            <person name="Gilna P."/>
            <person name="Han C."/>
            <person name="Hill K."/>
            <person name="Hitchcock P."/>
            <person name="Jackson P."/>
            <person name="Keim P."/>
            <person name="Longmire J."/>
            <person name="Lucas S."/>
            <person name="Okinaka R."/>
            <person name="Richardson P."/>
            <person name="Rubin E."/>
            <person name="Tice H."/>
        </authorList>
    </citation>
    <scope>NUCLEOTIDE SEQUENCE [LARGE SCALE GENOMIC DNA]</scope>
    <source>
        <strain>Sterne</strain>
    </source>
</reference>
<reference key="4">
    <citation type="journal article" date="2003" name="J. Biol. Chem.">
        <title>Production of Bacillus anthracis protective antigen is dependent on the extracellular chaperone, PrsA.</title>
        <authorList>
            <person name="Williams R.C."/>
            <person name="Rees M.L."/>
            <person name="Jacobs M.F."/>
            <person name="Pragai Z."/>
            <person name="Thwaite J.E."/>
            <person name="Baillie L.W."/>
            <person name="Emmerson P.T."/>
            <person name="Harwood C.R."/>
        </authorList>
    </citation>
    <scope>CHARACTERIZATION</scope>
</reference>
<proteinExistence type="evidence at protein level"/>
<name>PRSA2_BACAN</name>
<accession>Q81TU1</accession>
<accession>Q6I224</accession>
<accession>Q6KVW2</accession>
<keyword id="KW-0002">3D-structure</keyword>
<keyword id="KW-1003">Cell membrane</keyword>
<keyword id="KW-0413">Isomerase</keyword>
<keyword id="KW-0449">Lipoprotein</keyword>
<keyword id="KW-0472">Membrane</keyword>
<keyword id="KW-0564">Palmitate</keyword>
<keyword id="KW-1185">Reference proteome</keyword>
<keyword id="KW-0697">Rotamase</keyword>
<keyword id="KW-0732">Signal</keyword>
<organism>
    <name type="scientific">Bacillus anthracis</name>
    <dbReference type="NCBI Taxonomy" id="1392"/>
    <lineage>
        <taxon>Bacteria</taxon>
        <taxon>Bacillati</taxon>
        <taxon>Bacillota</taxon>
        <taxon>Bacilli</taxon>
        <taxon>Bacillales</taxon>
        <taxon>Bacillaceae</taxon>
        <taxon>Bacillus</taxon>
        <taxon>Bacillus cereus group</taxon>
    </lineage>
</organism>
<protein>
    <recommendedName>
        <fullName>Foldase protein PrsA 2</fullName>
        <ecNumber>5.2.1.8</ecNumber>
    </recommendedName>
</protein>
<gene>
    <name type="primary">prsA2</name>
    <name type="synonym">prsA-2</name>
    <name type="ordered locus">BA_1169</name>
    <name type="ordered locus">GBAA_1169</name>
    <name type="ordered locus">BAS1084</name>
</gene>
<feature type="signal peptide" evidence="1">
    <location>
        <begin position="1"/>
        <end position="20"/>
    </location>
</feature>
<feature type="chain" id="PRO_0000029292" description="Foldase protein PrsA 2">
    <location>
        <begin position="21"/>
        <end position="285"/>
    </location>
</feature>
<feature type="domain" description="PpiC">
    <location>
        <begin position="134"/>
        <end position="224"/>
    </location>
</feature>
<feature type="lipid moiety-binding region" description="N-palmitoyl cysteine" evidence="1">
    <location>
        <position position="21"/>
    </location>
</feature>
<feature type="lipid moiety-binding region" description="S-diacylglycerol cysteine" evidence="1">
    <location>
        <position position="21"/>
    </location>
</feature>
<feature type="helix" evidence="3">
    <location>
        <begin position="55"/>
        <end position="68"/>
    </location>
</feature>
<feature type="helix" evidence="3">
    <location>
        <begin position="73"/>
        <end position="87"/>
    </location>
</feature>
<feature type="helix" evidence="3">
    <location>
        <begin position="88"/>
        <end position="90"/>
    </location>
</feature>
<feature type="helix" evidence="3">
    <location>
        <begin position="91"/>
        <end position="97"/>
    </location>
</feature>
<feature type="helix" evidence="3">
    <location>
        <begin position="103"/>
        <end position="122"/>
    </location>
</feature>
<feature type="helix" evidence="3">
    <location>
        <begin position="126"/>
        <end position="131"/>
    </location>
</feature>
<feature type="strand" evidence="3">
    <location>
        <begin position="137"/>
        <end position="145"/>
    </location>
</feature>
<feature type="helix" evidence="3">
    <location>
        <begin position="147"/>
        <end position="158"/>
    </location>
</feature>
<feature type="helix" evidence="3">
    <location>
        <begin position="163"/>
        <end position="170"/>
    </location>
</feature>
<feature type="helix" evidence="3">
    <location>
        <begin position="174"/>
        <end position="177"/>
    </location>
</feature>
<feature type="turn" evidence="3">
    <location>
        <begin position="178"/>
        <end position="181"/>
    </location>
</feature>
<feature type="strand" evidence="3">
    <location>
        <begin position="182"/>
        <end position="186"/>
    </location>
</feature>
<feature type="helix" evidence="3">
    <location>
        <begin position="193"/>
        <end position="201"/>
    </location>
</feature>
<feature type="strand" evidence="3">
    <location>
        <begin position="211"/>
        <end position="213"/>
    </location>
</feature>
<feature type="strand" evidence="3">
    <location>
        <begin position="216"/>
        <end position="225"/>
    </location>
</feature>
<feature type="helix" evidence="3">
    <location>
        <begin position="231"/>
        <end position="247"/>
    </location>
</feature>
<feature type="helix" evidence="3">
    <location>
        <begin position="250"/>
        <end position="263"/>
    </location>
</feature>